<accession>Q57CE8</accession>
<evidence type="ECO:0000255" key="1">
    <source>
        <dbReference type="HAMAP-Rule" id="MF_01953"/>
    </source>
</evidence>
<keyword id="KW-0963">Cytoplasm</keyword>
<keyword id="KW-0378">Hydrolase</keyword>
<keyword id="KW-0479">Metal-binding</keyword>
<keyword id="KW-0533">Nickel</keyword>
<comment type="catalytic activity">
    <reaction evidence="1">
        <text>urea + 2 H2O + H(+) = hydrogencarbonate + 2 NH4(+)</text>
        <dbReference type="Rhea" id="RHEA:20557"/>
        <dbReference type="ChEBI" id="CHEBI:15377"/>
        <dbReference type="ChEBI" id="CHEBI:15378"/>
        <dbReference type="ChEBI" id="CHEBI:16199"/>
        <dbReference type="ChEBI" id="CHEBI:17544"/>
        <dbReference type="ChEBI" id="CHEBI:28938"/>
        <dbReference type="EC" id="3.5.1.5"/>
    </reaction>
</comment>
<comment type="cofactor">
    <cofactor evidence="1">
        <name>Ni cation</name>
        <dbReference type="ChEBI" id="CHEBI:25516"/>
    </cofactor>
    <text evidence="1">Binds 2 nickel ions per subunit.</text>
</comment>
<comment type="pathway">
    <text evidence="1">Nitrogen metabolism; urea degradation; CO(2) and NH(3) from urea (urease route): step 1/1.</text>
</comment>
<comment type="subunit">
    <text evidence="1">Heterotrimer of UreA (gamma), UreB (beta) and UreC (alpha) subunits. Three heterotrimers associate to form the active enzyme.</text>
</comment>
<comment type="subcellular location">
    <subcellularLocation>
        <location evidence="1">Cytoplasm</location>
    </subcellularLocation>
</comment>
<comment type="PTM">
    <text evidence="1">Carboxylation allows a single lysine to coordinate two nickel ions.</text>
</comment>
<comment type="similarity">
    <text evidence="1">Belongs to the metallo-dependent hydrolases superfamily. Urease alpha subunit family.</text>
</comment>
<proteinExistence type="inferred from homology"/>
<gene>
    <name evidence="1" type="primary">ureC2</name>
    <name type="ordered locus">BruAb1_1355</name>
</gene>
<sequence>MTQISRQQYADLYGPTIGDKIRLGDSDLYVEIEKDLRATYGDELQYGGGKTLRDGMGSENFLTQEAGCLDLVITNVTVIDAIQGVVKADVGIRNGRIVGLGKAGNPSTKDGVTRGLVTGASTDAISGEHLILTAGGMDTHVHYIAPQQVEAALSNGITTLWGGGIGPVDGTNGVTTTNGPWNLEMMLRSIEGLPINFGIQGKGNSTGIAPLIEQLEAGAAGFKVHEDYGATPATIRACLSVADEYDVSVAVHTDTLNESGYVEDTIAAFDGRSVHTYHSEGAGGGHAPDLLKVVGQNNILPSSTNPTLPCGKNSVAELFDMIMVCHNLNPKIPSDVAFAESRVRAETIVAESVLHDMGAISMIGSDSQAMGRLGETFLRAIQTADAMKKARGPLPEDAPGNDNFRVLRYIAKVTINPALTAGVGDVIGSIESGKFADLVLWEPAFFGVKPKLVLKGGLVAWANMGDPNASLPTPQPMYYRPMFAAYGSALQKTSITFVSRAAYDKGVADRFGLQRLVMPVSGTRVIGKAHMVRNSYLPNIEVDPQTFAVKVDGVHATVKPPQSISLNQLYFFS</sequence>
<name>URE12_BRUAB</name>
<dbReference type="EC" id="3.5.1.5" evidence="1"/>
<dbReference type="EMBL" id="AE017223">
    <property type="protein sequence ID" value="AAX74686.1"/>
    <property type="molecule type" value="Genomic_DNA"/>
</dbReference>
<dbReference type="RefSeq" id="WP_002966881.1">
    <property type="nucleotide sequence ID" value="NC_006932.1"/>
</dbReference>
<dbReference type="SMR" id="Q57CE8"/>
<dbReference type="EnsemblBacteria" id="AAX74686">
    <property type="protein sequence ID" value="AAX74686"/>
    <property type="gene ID" value="BruAb1_1355"/>
</dbReference>
<dbReference type="KEGG" id="bmb:BruAb1_1355"/>
<dbReference type="HOGENOM" id="CLU_000980_0_0_5"/>
<dbReference type="UniPathway" id="UPA00258">
    <property type="reaction ID" value="UER00370"/>
</dbReference>
<dbReference type="Proteomes" id="UP000000540">
    <property type="component" value="Chromosome I"/>
</dbReference>
<dbReference type="GO" id="GO:0005737">
    <property type="term" value="C:cytoplasm"/>
    <property type="evidence" value="ECO:0007669"/>
    <property type="project" value="UniProtKB-SubCell"/>
</dbReference>
<dbReference type="GO" id="GO:0016151">
    <property type="term" value="F:nickel cation binding"/>
    <property type="evidence" value="ECO:0007669"/>
    <property type="project" value="UniProtKB-UniRule"/>
</dbReference>
<dbReference type="GO" id="GO:0009039">
    <property type="term" value="F:urease activity"/>
    <property type="evidence" value="ECO:0007669"/>
    <property type="project" value="UniProtKB-UniRule"/>
</dbReference>
<dbReference type="GO" id="GO:0043419">
    <property type="term" value="P:urea catabolic process"/>
    <property type="evidence" value="ECO:0007669"/>
    <property type="project" value="UniProtKB-UniRule"/>
</dbReference>
<dbReference type="CDD" id="cd00375">
    <property type="entry name" value="Urease_alpha"/>
    <property type="match status" value="1"/>
</dbReference>
<dbReference type="Gene3D" id="3.20.20.140">
    <property type="entry name" value="Metal-dependent hydrolases"/>
    <property type="match status" value="1"/>
</dbReference>
<dbReference type="Gene3D" id="2.30.40.10">
    <property type="entry name" value="Urease, subunit C, domain 1"/>
    <property type="match status" value="1"/>
</dbReference>
<dbReference type="HAMAP" id="MF_01953">
    <property type="entry name" value="Urease_alpha"/>
    <property type="match status" value="1"/>
</dbReference>
<dbReference type="InterPro" id="IPR006680">
    <property type="entry name" value="Amidohydro-rel"/>
</dbReference>
<dbReference type="InterPro" id="IPR011059">
    <property type="entry name" value="Metal-dep_hydrolase_composite"/>
</dbReference>
<dbReference type="InterPro" id="IPR032466">
    <property type="entry name" value="Metal_Hydrolase"/>
</dbReference>
<dbReference type="InterPro" id="IPR001763">
    <property type="entry name" value="Rhodanese-like_dom"/>
</dbReference>
<dbReference type="InterPro" id="IPR011612">
    <property type="entry name" value="Urease_alpha_N_dom"/>
</dbReference>
<dbReference type="InterPro" id="IPR050112">
    <property type="entry name" value="Urease_alpha_subunit"/>
</dbReference>
<dbReference type="InterPro" id="IPR017950">
    <property type="entry name" value="Urease_AS"/>
</dbReference>
<dbReference type="InterPro" id="IPR005848">
    <property type="entry name" value="Urease_asu"/>
</dbReference>
<dbReference type="InterPro" id="IPR017951">
    <property type="entry name" value="Urease_asu_c"/>
</dbReference>
<dbReference type="InterPro" id="IPR029754">
    <property type="entry name" value="Urease_Ni-bd"/>
</dbReference>
<dbReference type="NCBIfam" id="NF009686">
    <property type="entry name" value="PRK13207.1"/>
    <property type="match status" value="1"/>
</dbReference>
<dbReference type="NCBIfam" id="NF009834">
    <property type="entry name" value="PRK13309.1"/>
    <property type="match status" value="1"/>
</dbReference>
<dbReference type="NCBIfam" id="TIGR01792">
    <property type="entry name" value="urease_alph"/>
    <property type="match status" value="1"/>
</dbReference>
<dbReference type="PANTHER" id="PTHR43440">
    <property type="entry name" value="UREASE"/>
    <property type="match status" value="1"/>
</dbReference>
<dbReference type="PANTHER" id="PTHR43440:SF1">
    <property type="entry name" value="UREASE"/>
    <property type="match status" value="1"/>
</dbReference>
<dbReference type="Pfam" id="PF01979">
    <property type="entry name" value="Amidohydro_1"/>
    <property type="match status" value="1"/>
</dbReference>
<dbReference type="Pfam" id="PF00449">
    <property type="entry name" value="Urease_alpha"/>
    <property type="match status" value="1"/>
</dbReference>
<dbReference type="PRINTS" id="PR01752">
    <property type="entry name" value="UREASE"/>
</dbReference>
<dbReference type="SUPFAM" id="SSF51338">
    <property type="entry name" value="Composite domain of metallo-dependent hydrolases"/>
    <property type="match status" value="2"/>
</dbReference>
<dbReference type="SUPFAM" id="SSF51556">
    <property type="entry name" value="Metallo-dependent hydrolases"/>
    <property type="match status" value="1"/>
</dbReference>
<dbReference type="PROSITE" id="PS01120">
    <property type="entry name" value="UREASE_1"/>
    <property type="match status" value="1"/>
</dbReference>
<dbReference type="PROSITE" id="PS00145">
    <property type="entry name" value="UREASE_2"/>
    <property type="match status" value="1"/>
</dbReference>
<dbReference type="PROSITE" id="PS51368">
    <property type="entry name" value="UREASE_3"/>
    <property type="match status" value="1"/>
</dbReference>
<reference key="1">
    <citation type="journal article" date="2005" name="J. Bacteriol.">
        <title>Completion of the genome sequence of Brucella abortus and comparison to the highly similar genomes of Brucella melitensis and Brucella suis.</title>
        <authorList>
            <person name="Halling S.M."/>
            <person name="Peterson-Burch B.D."/>
            <person name="Bricker B.J."/>
            <person name="Zuerner R.L."/>
            <person name="Qing Z."/>
            <person name="Li L.-L."/>
            <person name="Kapur V."/>
            <person name="Alt D.P."/>
            <person name="Olsen S.C."/>
        </authorList>
    </citation>
    <scope>NUCLEOTIDE SEQUENCE [LARGE SCALE GENOMIC DNA]</scope>
    <source>
        <strain>9-941</strain>
    </source>
</reference>
<organism>
    <name type="scientific">Brucella abortus biovar 1 (strain 9-941)</name>
    <dbReference type="NCBI Taxonomy" id="262698"/>
    <lineage>
        <taxon>Bacteria</taxon>
        <taxon>Pseudomonadati</taxon>
        <taxon>Pseudomonadota</taxon>
        <taxon>Alphaproteobacteria</taxon>
        <taxon>Hyphomicrobiales</taxon>
        <taxon>Brucellaceae</taxon>
        <taxon>Brucella/Ochrobactrum group</taxon>
        <taxon>Brucella</taxon>
    </lineage>
</organism>
<feature type="chain" id="PRO_0000234140" description="Urease subunit alpha 2">
    <location>
        <begin position="1"/>
        <end position="573"/>
    </location>
</feature>
<feature type="domain" description="Urease" evidence="1">
    <location>
        <begin position="135"/>
        <end position="573"/>
    </location>
</feature>
<feature type="active site" description="Proton donor" evidence="1">
    <location>
        <position position="326"/>
    </location>
</feature>
<feature type="binding site" evidence="1">
    <location>
        <position position="140"/>
    </location>
    <ligand>
        <name>Ni(2+)</name>
        <dbReference type="ChEBI" id="CHEBI:49786"/>
        <label>1</label>
    </ligand>
</feature>
<feature type="binding site" evidence="1">
    <location>
        <position position="142"/>
    </location>
    <ligand>
        <name>Ni(2+)</name>
        <dbReference type="ChEBI" id="CHEBI:49786"/>
        <label>1</label>
    </ligand>
</feature>
<feature type="binding site" description="via carbamate group" evidence="1">
    <location>
        <position position="223"/>
    </location>
    <ligand>
        <name>Ni(2+)</name>
        <dbReference type="ChEBI" id="CHEBI:49786"/>
        <label>1</label>
    </ligand>
</feature>
<feature type="binding site" description="via carbamate group" evidence="1">
    <location>
        <position position="223"/>
    </location>
    <ligand>
        <name>Ni(2+)</name>
        <dbReference type="ChEBI" id="CHEBI:49786"/>
        <label>2</label>
    </ligand>
</feature>
<feature type="binding site" evidence="1">
    <location>
        <position position="225"/>
    </location>
    <ligand>
        <name>substrate</name>
    </ligand>
</feature>
<feature type="binding site" evidence="1">
    <location>
        <position position="252"/>
    </location>
    <ligand>
        <name>Ni(2+)</name>
        <dbReference type="ChEBI" id="CHEBI:49786"/>
        <label>2</label>
    </ligand>
</feature>
<feature type="binding site" evidence="1">
    <location>
        <position position="278"/>
    </location>
    <ligand>
        <name>Ni(2+)</name>
        <dbReference type="ChEBI" id="CHEBI:49786"/>
        <label>2</label>
    </ligand>
</feature>
<feature type="binding site" evidence="1">
    <location>
        <position position="366"/>
    </location>
    <ligand>
        <name>Ni(2+)</name>
        <dbReference type="ChEBI" id="CHEBI:49786"/>
        <label>1</label>
    </ligand>
</feature>
<feature type="modified residue" description="N6-carboxylysine" evidence="1">
    <location>
        <position position="223"/>
    </location>
</feature>
<protein>
    <recommendedName>
        <fullName evidence="1">Urease subunit alpha 2</fullName>
        <ecNumber evidence="1">3.5.1.5</ecNumber>
    </recommendedName>
    <alternativeName>
        <fullName evidence="1">Urea amidohydrolase subunit alpha 2</fullName>
    </alternativeName>
</protein>